<organism>
    <name type="scientific">Tupaia paramyxovirus</name>
    <name type="common">TPMV</name>
    <dbReference type="NCBI Taxonomy" id="92129"/>
    <lineage>
        <taxon>Viruses</taxon>
        <taxon>Riboviria</taxon>
        <taxon>Orthornavirae</taxon>
        <taxon>Negarnaviricota</taxon>
        <taxon>Haploviricotina</taxon>
        <taxon>Monjiviricetes</taxon>
        <taxon>Mononegavirales</taxon>
        <taxon>Paramyxoviridae</taxon>
        <taxon>Orthoparamyxovirinae</taxon>
        <taxon>Narmovirus</taxon>
        <taxon>Narmovirus tupaiae</taxon>
    </lineage>
</organism>
<proteinExistence type="inferred from homology"/>
<comment type="function">
    <text evidence="2 3">Essential cofactor of the RNA polymerase L that plays a central role in the transcription and replication by forming the polymerase complex with RNA polymerase L and recruiting L to the genomic N-RNA template for RNA synthesis (By similarity). Also plays a central role in the encapsidation of nascent RNA chains by forming the encapsidation complex with the nucleocapsid protein N (N-P complex). Acts as a chaperone for newly synthesized free N protein, so-called N0, allowing encapsidation of nascent RNA chains during replication (By similarity). The nucleoprotein protein N prevents excessive phosphorylation of P, which leads to down-regulation of viral transcription/ replication. Participates, together with N, in the formation of viral factories (viroplasms), which are large inclusions in the host cytoplasm where replication takes place (By similarity).</text>
</comment>
<comment type="subunit">
    <text evidence="2 3">Homotetramer. Interacts (via multimerization domain) with polymerase L; this interaction forms the polymerase L-P complex (By similarity). Interacts (via N-terminus) with N0 (via Ncore); this interaction allows P to chaperon N0 to avoid N polymerization before encapsidation. Interacts (via C-terminus) with N-RNA template; this interaction positions the polymerase on the template for both transcription and replication (By similarity).</text>
</comment>
<comment type="subcellular location">
    <subcellularLocation>
        <location>Host cytoplasm</location>
    </subcellularLocation>
</comment>
<comment type="domain">
    <text evidence="1 2 3">The N-terminus consists of a long intrinsically disordered tail. The central part contains the coiled-coil multimerization domain (PMD) (By similarity). Forms a four-stranded coiled coil structure (By similarity). The C-terminus constitutes the alpha-helical domain that binds to the nucleocapsid (N-RNA complex) (By similarity).</text>
</comment>
<comment type="RNA editing">
    <location>
        <position position="229" evidence="5"/>
    </location>
    <text>Partially edited. RNA editing at this position consists of an insertion of one guanine nucleotide. The sequence displayed here is the P protein, derived from the edited RNA. The unedited RNA gives rise to the V protein (AC Q9QM81).</text>
</comment>
<comment type="similarity">
    <text evidence="6">Belongs to the morbillivirus P protein family.</text>
</comment>
<evidence type="ECO:0000250" key="1">
    <source>
        <dbReference type="UniProtKB" id="P04859"/>
    </source>
</evidence>
<evidence type="ECO:0000250" key="2">
    <source>
        <dbReference type="UniProtKB" id="P06162"/>
    </source>
</evidence>
<evidence type="ECO:0000250" key="3">
    <source>
        <dbReference type="UniProtKB" id="Q77M42"/>
    </source>
</evidence>
<evidence type="ECO:0000256" key="4">
    <source>
        <dbReference type="SAM" id="MobiDB-lite"/>
    </source>
</evidence>
<evidence type="ECO:0000269" key="5">
    <source>
    </source>
</evidence>
<evidence type="ECO:0000305" key="6"/>
<accession>Q9WS39</accession>
<dbReference type="EMBL" id="AF079780">
    <property type="protein sequence ID" value="AAD28695.1"/>
    <property type="molecule type" value="Genomic_RNA"/>
</dbReference>
<dbReference type="RefSeq" id="NP_054691.1">
    <property type="nucleotide sequence ID" value="NC_002199.1"/>
</dbReference>
<dbReference type="SMR" id="Q9WS39"/>
<dbReference type="KEGG" id="vg:1452636"/>
<dbReference type="OrthoDB" id="10126at10239"/>
<dbReference type="Proteomes" id="UP000136220">
    <property type="component" value="Genome"/>
</dbReference>
<dbReference type="GO" id="GO:0030430">
    <property type="term" value="C:host cell cytoplasm"/>
    <property type="evidence" value="ECO:0007669"/>
    <property type="project" value="UniProtKB-SubCell"/>
</dbReference>
<dbReference type="Gene3D" id="1.20.5.110">
    <property type="match status" value="1"/>
</dbReference>
<dbReference type="InterPro" id="IPR004897">
    <property type="entry name" value="P/V_Pprotein_paramyxoviral"/>
</dbReference>
<dbReference type="InterPro" id="IPR028243">
    <property type="entry name" value="Paramyxo_P/V_N"/>
</dbReference>
<dbReference type="Pfam" id="PF03210">
    <property type="entry name" value="Paramyx_P_V_C"/>
    <property type="match status" value="1"/>
</dbReference>
<dbReference type="Pfam" id="PF13825">
    <property type="entry name" value="Paramyxo_P_V_N"/>
    <property type="match status" value="1"/>
</dbReference>
<organismHost>
    <name type="scientific">Tupaia belangeri</name>
    <name type="common">Common tree shrew</name>
    <name type="synonym">Tupaia glis belangeri</name>
    <dbReference type="NCBI Taxonomy" id="37347"/>
</organismHost>
<reference key="1">
    <citation type="journal article" date="1999" name="Virology">
        <title>Isolation and molecular characterization of a novel cytopathogenic paramyxovirus from tree shrews.</title>
        <authorList>
            <person name="Tidona C.A."/>
            <person name="Kurz H.W."/>
            <person name="Gelderblom H.R."/>
            <person name="Darai G."/>
        </authorList>
    </citation>
    <scope>NUCLEOTIDE SEQUENCE [GENOMIC RNA]</scope>
    <scope>RNA EDITING</scope>
</reference>
<gene>
    <name type="primary">P/V</name>
</gene>
<keyword id="KW-1035">Host cytoplasm</keyword>
<keyword id="KW-0597">Phosphoprotein</keyword>
<keyword id="KW-1185">Reference proteome</keyword>
<keyword id="KW-0691">RNA editing</keyword>
<keyword id="KW-0693">Viral RNA replication</keyword>
<protein>
    <recommendedName>
        <fullName>Phosphoprotein</fullName>
        <shortName>Protein P</shortName>
    </recommendedName>
</protein>
<sequence length="527" mass="57380">MNNTEIIENASKVLEAIDAAKEEELRNLNSLVQPRAPLNAGSTPGEIINEIKHLSTRDQEGGTSSKDEEESGAGRTVAEGAATRDHKYSKSRPKKQPRSGLQSGAAGKNPTPDGEGGDTCNRELDQHSDGDGHSNTEGASSDLASIQPCQTDDAPCSSTSYLDEEDEPAVRPKTQCKQSGLIESKEDEDGMLSELHEQHKGRSKRLSALGRVNSSPIPSPRPDELLKKGIGESIVWSGRMTESLLSHGVIQCVPGSDRYQSGKSVSVADAHLNARSACWTQNKEPQCHITNSPSDTSTDNASRSELRTIEEEDYLQDDDFEQSIEDRDFDPGDWDPSDKHNDNGLLLQILKNQEEILNRLKTIGSIQESLDSIKRIQSKQGLALSTLEGLLSSVMIAIPGSGNPGSSVEINPDLKPMLGRNKNRALKEVSDELTPPNQFLQKQGMTIQQAVKPKETMFPPAIKTGESSAKGFHPKENLVSRTVINSIITARVNNPELAAKLKLAVAKAQTKEELERIHKSIIKNLKN</sequence>
<feature type="chain" id="PRO_0000142719" description="Phosphoprotein">
    <location>
        <begin position="1"/>
        <end position="527"/>
    </location>
</feature>
<feature type="region of interest" description="Disordered" evidence="4">
    <location>
        <begin position="29"/>
        <end position="225"/>
    </location>
</feature>
<feature type="region of interest" description="Disordered" evidence="4">
    <location>
        <begin position="285"/>
        <end position="319"/>
    </location>
</feature>
<feature type="region of interest" description="Multimerization" evidence="3">
    <location>
        <begin position="312"/>
        <end position="400"/>
    </location>
</feature>
<feature type="region of interest" description="Interaction with the nucleocapsid (N-RNA)" evidence="3">
    <location>
        <begin position="479"/>
        <end position="527"/>
    </location>
</feature>
<feature type="compositionally biased region" description="Basic and acidic residues" evidence="4">
    <location>
        <begin position="49"/>
        <end position="60"/>
    </location>
</feature>
<feature type="compositionally biased region" description="Basic and acidic residues" evidence="4">
    <location>
        <begin position="120"/>
        <end position="134"/>
    </location>
</feature>
<feature type="compositionally biased region" description="Polar residues" evidence="4">
    <location>
        <begin position="135"/>
        <end position="161"/>
    </location>
</feature>
<feature type="compositionally biased region" description="Polar residues" evidence="4">
    <location>
        <begin position="285"/>
        <end position="301"/>
    </location>
</feature>
<feature type="compositionally biased region" description="Acidic residues" evidence="4">
    <location>
        <begin position="310"/>
        <end position="319"/>
    </location>
</feature>
<name>PHOSP_TPMV</name>